<protein>
    <recommendedName>
        <fullName evidence="1">Probable chorismate pyruvate-lyase</fullName>
        <shortName evidence="1">CL</shortName>
        <shortName evidence="1">CPL</shortName>
        <ecNumber evidence="1">4.1.3.40</ecNumber>
    </recommendedName>
</protein>
<gene>
    <name evidence="1" type="primary">ubiC</name>
    <name type="ordered locus">AZOSEA12680</name>
    <name type="ORF">ebA2295</name>
</gene>
<evidence type="ECO:0000255" key="1">
    <source>
        <dbReference type="HAMAP-Rule" id="MF_01632"/>
    </source>
</evidence>
<dbReference type="EC" id="4.1.3.40" evidence="1"/>
<dbReference type="EMBL" id="CR555306">
    <property type="protein sequence ID" value="CAI07393.1"/>
    <property type="molecule type" value="Genomic_DNA"/>
</dbReference>
<dbReference type="RefSeq" id="WP_011237113.1">
    <property type="nucleotide sequence ID" value="NC_006513.1"/>
</dbReference>
<dbReference type="SMR" id="Q5P5L9"/>
<dbReference type="STRING" id="76114.ebA2295"/>
<dbReference type="KEGG" id="eba:ebA2295"/>
<dbReference type="eggNOG" id="COG3161">
    <property type="taxonomic scope" value="Bacteria"/>
</dbReference>
<dbReference type="HOGENOM" id="CLU_096824_2_0_4"/>
<dbReference type="OrthoDB" id="8606430at2"/>
<dbReference type="UniPathway" id="UPA00232"/>
<dbReference type="Proteomes" id="UP000006552">
    <property type="component" value="Chromosome"/>
</dbReference>
<dbReference type="GO" id="GO:0005829">
    <property type="term" value="C:cytosol"/>
    <property type="evidence" value="ECO:0007669"/>
    <property type="project" value="TreeGrafter"/>
</dbReference>
<dbReference type="GO" id="GO:0008813">
    <property type="term" value="F:chorismate lyase activity"/>
    <property type="evidence" value="ECO:0007669"/>
    <property type="project" value="UniProtKB-UniRule"/>
</dbReference>
<dbReference type="GO" id="GO:0042866">
    <property type="term" value="P:pyruvate biosynthetic process"/>
    <property type="evidence" value="ECO:0007669"/>
    <property type="project" value="UniProtKB-UniRule"/>
</dbReference>
<dbReference type="GO" id="GO:0006744">
    <property type="term" value="P:ubiquinone biosynthetic process"/>
    <property type="evidence" value="ECO:0007669"/>
    <property type="project" value="UniProtKB-UniRule"/>
</dbReference>
<dbReference type="Gene3D" id="3.40.1410.10">
    <property type="entry name" value="Chorismate lyase-like"/>
    <property type="match status" value="1"/>
</dbReference>
<dbReference type="HAMAP" id="MF_01632">
    <property type="entry name" value="UbiC"/>
    <property type="match status" value="1"/>
</dbReference>
<dbReference type="InterPro" id="IPR007440">
    <property type="entry name" value="Chorismate--pyruvate_lyase"/>
</dbReference>
<dbReference type="InterPro" id="IPR028978">
    <property type="entry name" value="Chorismate_lyase_/UTRA_dom_sf"/>
</dbReference>
<dbReference type="PANTHER" id="PTHR38683">
    <property type="entry name" value="CHORISMATE PYRUVATE-LYASE"/>
    <property type="match status" value="1"/>
</dbReference>
<dbReference type="PANTHER" id="PTHR38683:SF1">
    <property type="entry name" value="CHORISMATE PYRUVATE-LYASE"/>
    <property type="match status" value="1"/>
</dbReference>
<dbReference type="Pfam" id="PF04345">
    <property type="entry name" value="Chor_lyase"/>
    <property type="match status" value="1"/>
</dbReference>
<dbReference type="SUPFAM" id="SSF64288">
    <property type="entry name" value="Chorismate lyase-like"/>
    <property type="match status" value="1"/>
</dbReference>
<accession>Q5P5L9</accession>
<feature type="chain" id="PRO_0000240533" description="Probable chorismate pyruvate-lyase">
    <location>
        <begin position="1"/>
        <end position="185"/>
    </location>
</feature>
<feature type="binding site" evidence="1">
    <location>
        <position position="75"/>
    </location>
    <ligand>
        <name>substrate</name>
    </ligand>
</feature>
<feature type="binding site" evidence="1">
    <location>
        <position position="113"/>
    </location>
    <ligand>
        <name>substrate</name>
    </ligand>
</feature>
<feature type="binding site" evidence="1">
    <location>
        <position position="174"/>
    </location>
    <ligand>
        <name>substrate</name>
    </ligand>
</feature>
<comment type="function">
    <text evidence="1">Removes the pyruvyl group from chorismate, with concomitant aromatization of the ring, to provide 4-hydroxybenzoate (4HB) for the ubiquinone pathway.</text>
</comment>
<comment type="catalytic activity">
    <reaction evidence="1">
        <text>chorismate = 4-hydroxybenzoate + pyruvate</text>
        <dbReference type="Rhea" id="RHEA:16505"/>
        <dbReference type="ChEBI" id="CHEBI:15361"/>
        <dbReference type="ChEBI" id="CHEBI:17879"/>
        <dbReference type="ChEBI" id="CHEBI:29748"/>
        <dbReference type="EC" id="4.1.3.40"/>
    </reaction>
</comment>
<comment type="pathway">
    <text evidence="1">Cofactor biosynthesis; ubiquinone biosynthesis.</text>
</comment>
<comment type="subcellular location">
    <subcellularLocation>
        <location evidence="1">Cytoplasm</location>
    </subcellularLocation>
</comment>
<comment type="similarity">
    <text evidence="1">Belongs to the UbiC family.</text>
</comment>
<sequence>MRIRPHSETWLKRPPRPRVPARLRPWLTDPGSLTARIRSRCSLFSVNVLAQRLAVPHPDEAALLGLRRGELAWLREVLLVADGVPVVFARSILPRHDVRGAWILFQGLGSRPLGAALFADPRIGRKPLACACLDRRDARYHRASAAAAPRRLPLALWARRSLFGLRGRTLLVSEVFLPTILELPT</sequence>
<name>UBIC_AROAE</name>
<reference key="1">
    <citation type="journal article" date="2005" name="Arch. Microbiol.">
        <title>The genome sequence of an anaerobic aromatic-degrading denitrifying bacterium, strain EbN1.</title>
        <authorList>
            <person name="Rabus R."/>
            <person name="Kube M."/>
            <person name="Heider J."/>
            <person name="Beck A."/>
            <person name="Heitmann K."/>
            <person name="Widdel F."/>
            <person name="Reinhardt R."/>
        </authorList>
    </citation>
    <scope>NUCLEOTIDE SEQUENCE [LARGE SCALE GENOMIC DNA]</scope>
    <source>
        <strain>DSM 19018 / LMG 30748 / EbN1</strain>
    </source>
</reference>
<keyword id="KW-0963">Cytoplasm</keyword>
<keyword id="KW-0456">Lyase</keyword>
<keyword id="KW-0670">Pyruvate</keyword>
<keyword id="KW-1185">Reference proteome</keyword>
<keyword id="KW-0831">Ubiquinone biosynthesis</keyword>
<organism>
    <name type="scientific">Aromatoleum aromaticum (strain DSM 19018 / LMG 30748 / EbN1)</name>
    <name type="common">Azoarcus sp. (strain EbN1)</name>
    <dbReference type="NCBI Taxonomy" id="76114"/>
    <lineage>
        <taxon>Bacteria</taxon>
        <taxon>Pseudomonadati</taxon>
        <taxon>Pseudomonadota</taxon>
        <taxon>Betaproteobacteria</taxon>
        <taxon>Rhodocyclales</taxon>
        <taxon>Rhodocyclaceae</taxon>
        <taxon>Aromatoleum</taxon>
    </lineage>
</organism>
<proteinExistence type="inferred from homology"/>